<reference key="1">
    <citation type="journal article" date="2010" name="Appl. Environ. Microbiol.">
        <title>The genome sequence of Psychrobacter arcticus 273-4, a psychroactive Siberian permafrost bacterium, reveals mechanisms for adaptation to low-temperature growth.</title>
        <authorList>
            <person name="Ayala-del-Rio H.L."/>
            <person name="Chain P.S."/>
            <person name="Grzymski J.J."/>
            <person name="Ponder M.A."/>
            <person name="Ivanova N."/>
            <person name="Bergholz P.W."/>
            <person name="Di Bartolo G."/>
            <person name="Hauser L."/>
            <person name="Land M."/>
            <person name="Bakermans C."/>
            <person name="Rodrigues D."/>
            <person name="Klappenbach J."/>
            <person name="Zarka D."/>
            <person name="Larimer F."/>
            <person name="Richardson P."/>
            <person name="Murray A."/>
            <person name="Thomashow M."/>
            <person name="Tiedje J.M."/>
        </authorList>
    </citation>
    <scope>NUCLEOTIDE SEQUENCE [LARGE SCALE GENOMIC DNA]</scope>
    <source>
        <strain>DSM 17307 / VKM B-2377 / 273-4</strain>
    </source>
</reference>
<feature type="chain" id="PRO_0000196695" description="Putative phosphoenolpyruvate synthase regulatory protein">
    <location>
        <begin position="1"/>
        <end position="282"/>
    </location>
</feature>
<feature type="binding site" evidence="1">
    <location>
        <begin position="162"/>
        <end position="169"/>
    </location>
    <ligand>
        <name>ADP</name>
        <dbReference type="ChEBI" id="CHEBI:456216"/>
    </ligand>
</feature>
<evidence type="ECO:0000255" key="1">
    <source>
        <dbReference type="HAMAP-Rule" id="MF_01062"/>
    </source>
</evidence>
<evidence type="ECO:0000305" key="2"/>
<proteinExistence type="inferred from homology"/>
<dbReference type="EC" id="2.7.11.33" evidence="1"/>
<dbReference type="EC" id="2.7.4.28" evidence="1"/>
<dbReference type="EMBL" id="CP000082">
    <property type="protein sequence ID" value="AAZ19184.1"/>
    <property type="status" value="ALT_INIT"/>
    <property type="molecule type" value="Genomic_DNA"/>
</dbReference>
<dbReference type="RefSeq" id="WP_041753451.1">
    <property type="nucleotide sequence ID" value="NC_007204.1"/>
</dbReference>
<dbReference type="SMR" id="Q4FS24"/>
<dbReference type="STRING" id="259536.Psyc_1334"/>
<dbReference type="KEGG" id="par:Psyc_1334"/>
<dbReference type="eggNOG" id="COG1806">
    <property type="taxonomic scope" value="Bacteria"/>
</dbReference>
<dbReference type="HOGENOM" id="CLU_046206_1_0_6"/>
<dbReference type="Proteomes" id="UP000000546">
    <property type="component" value="Chromosome"/>
</dbReference>
<dbReference type="GO" id="GO:0043531">
    <property type="term" value="F:ADP binding"/>
    <property type="evidence" value="ECO:0007669"/>
    <property type="project" value="UniProtKB-UniRule"/>
</dbReference>
<dbReference type="GO" id="GO:0005524">
    <property type="term" value="F:ATP binding"/>
    <property type="evidence" value="ECO:0007669"/>
    <property type="project" value="InterPro"/>
</dbReference>
<dbReference type="GO" id="GO:0016776">
    <property type="term" value="F:phosphotransferase activity, phosphate group as acceptor"/>
    <property type="evidence" value="ECO:0007669"/>
    <property type="project" value="UniProtKB-UniRule"/>
</dbReference>
<dbReference type="GO" id="GO:0004674">
    <property type="term" value="F:protein serine/threonine kinase activity"/>
    <property type="evidence" value="ECO:0007669"/>
    <property type="project" value="UniProtKB-UniRule"/>
</dbReference>
<dbReference type="HAMAP" id="MF_01062">
    <property type="entry name" value="PSRP"/>
    <property type="match status" value="1"/>
</dbReference>
<dbReference type="InterPro" id="IPR005177">
    <property type="entry name" value="Kinase-pyrophosphorylase"/>
</dbReference>
<dbReference type="InterPro" id="IPR026530">
    <property type="entry name" value="PSRP"/>
</dbReference>
<dbReference type="NCBIfam" id="NF003742">
    <property type="entry name" value="PRK05339.1"/>
    <property type="match status" value="1"/>
</dbReference>
<dbReference type="PANTHER" id="PTHR31756">
    <property type="entry name" value="PYRUVATE, PHOSPHATE DIKINASE REGULATORY PROTEIN 1, CHLOROPLASTIC"/>
    <property type="match status" value="1"/>
</dbReference>
<dbReference type="PANTHER" id="PTHR31756:SF3">
    <property type="entry name" value="PYRUVATE, PHOSPHATE DIKINASE REGULATORY PROTEIN 1, CHLOROPLASTIC"/>
    <property type="match status" value="1"/>
</dbReference>
<dbReference type="Pfam" id="PF03618">
    <property type="entry name" value="Kinase-PPPase"/>
    <property type="match status" value="1"/>
</dbReference>
<accession>Q4FS24</accession>
<gene>
    <name type="ordered locus">Psyc_1334</name>
</gene>
<comment type="function">
    <text evidence="1">Bifunctional serine/threonine kinase and phosphorylase involved in the regulation of the phosphoenolpyruvate synthase (PEPS) by catalyzing its phosphorylation/dephosphorylation.</text>
</comment>
<comment type="catalytic activity">
    <reaction evidence="1">
        <text>[pyruvate, water dikinase] + ADP = [pyruvate, water dikinase]-phosphate + AMP + H(+)</text>
        <dbReference type="Rhea" id="RHEA:46020"/>
        <dbReference type="Rhea" id="RHEA-COMP:11425"/>
        <dbReference type="Rhea" id="RHEA-COMP:11426"/>
        <dbReference type="ChEBI" id="CHEBI:15378"/>
        <dbReference type="ChEBI" id="CHEBI:43176"/>
        <dbReference type="ChEBI" id="CHEBI:68546"/>
        <dbReference type="ChEBI" id="CHEBI:456215"/>
        <dbReference type="ChEBI" id="CHEBI:456216"/>
        <dbReference type="EC" id="2.7.11.33"/>
    </reaction>
</comment>
<comment type="catalytic activity">
    <reaction evidence="1">
        <text>[pyruvate, water dikinase]-phosphate + phosphate + H(+) = [pyruvate, water dikinase] + diphosphate</text>
        <dbReference type="Rhea" id="RHEA:48580"/>
        <dbReference type="Rhea" id="RHEA-COMP:11425"/>
        <dbReference type="Rhea" id="RHEA-COMP:11426"/>
        <dbReference type="ChEBI" id="CHEBI:15378"/>
        <dbReference type="ChEBI" id="CHEBI:33019"/>
        <dbReference type="ChEBI" id="CHEBI:43176"/>
        <dbReference type="ChEBI" id="CHEBI:43474"/>
        <dbReference type="ChEBI" id="CHEBI:68546"/>
        <dbReference type="EC" id="2.7.4.28"/>
    </reaction>
</comment>
<comment type="similarity">
    <text evidence="1">Belongs to the pyruvate, phosphate/water dikinase regulatory protein family. PSRP subfamily.</text>
</comment>
<comment type="sequence caution" evidence="2">
    <conflict type="erroneous initiation">
        <sequence resource="EMBL-CDS" id="AAZ19184"/>
    </conflict>
</comment>
<sequence length="282" mass="31554">MKALEVDNAQNIRTAFFISDGTAITAETLGRAILSQFASVPFETRVLPYVDNLERAEDAVVQINTAYQRDGLLPLVFDTIVSPEIREKINSAHSCNLDMYEGLIGRVAEETGVEPDGHSGHAHDNVDSETYKERIDAVHFALDNDDGARTRHYHAADIILIGVSRSGKTPTSLYLALQFGIRAANYPLTEEDLNDNQLPKALREHKHKLFGLIIDTDRLVKIRQERRAGSRYSSYQQCQQEQRAIQGIYTSQGIPSLDVSEMSVEEIATRILQMTGLKRRIG</sequence>
<name>PSRP_PSYA2</name>
<organism>
    <name type="scientific">Psychrobacter arcticus (strain DSM 17307 / VKM B-2377 / 273-4)</name>
    <dbReference type="NCBI Taxonomy" id="259536"/>
    <lineage>
        <taxon>Bacteria</taxon>
        <taxon>Pseudomonadati</taxon>
        <taxon>Pseudomonadota</taxon>
        <taxon>Gammaproteobacteria</taxon>
        <taxon>Moraxellales</taxon>
        <taxon>Moraxellaceae</taxon>
        <taxon>Psychrobacter</taxon>
    </lineage>
</organism>
<keyword id="KW-0418">Kinase</keyword>
<keyword id="KW-0547">Nucleotide-binding</keyword>
<keyword id="KW-1185">Reference proteome</keyword>
<keyword id="KW-0723">Serine/threonine-protein kinase</keyword>
<keyword id="KW-0808">Transferase</keyword>
<protein>
    <recommendedName>
        <fullName evidence="1">Putative phosphoenolpyruvate synthase regulatory protein</fullName>
        <shortName evidence="1">PEP synthase regulatory protein</shortName>
        <shortName evidence="1">PSRP</shortName>
        <ecNumber evidence="1">2.7.11.33</ecNumber>
        <ecNumber evidence="1">2.7.4.28</ecNumber>
    </recommendedName>
    <alternativeName>
        <fullName evidence="1">Pyruvate, water dikinase regulatory protein</fullName>
    </alternativeName>
</protein>